<feature type="initiator methionine" description="Removed" evidence="1">
    <location>
        <position position="1"/>
    </location>
</feature>
<feature type="chain" id="PRO_0000282826" description="Dolichol-phosphate mannosyltransferase subunit 1">
    <location>
        <begin position="2"/>
        <end position="260"/>
    </location>
</feature>
<feature type="region of interest" description="Disordered" evidence="3">
    <location>
        <begin position="1"/>
        <end position="20"/>
    </location>
</feature>
<feature type="binding site" evidence="2">
    <location>
        <position position="32"/>
    </location>
    <ligand>
        <name>GDP-alpha-D-mannose</name>
        <dbReference type="ChEBI" id="CHEBI:57527"/>
    </ligand>
</feature>
<feature type="binding site" evidence="2">
    <location>
        <position position="34"/>
    </location>
    <ligand>
        <name>GDP-alpha-D-mannose</name>
        <dbReference type="ChEBI" id="CHEBI:57527"/>
    </ligand>
</feature>
<feature type="binding site" evidence="2">
    <location>
        <position position="36"/>
    </location>
    <ligand>
        <name>GDP-alpha-D-mannose</name>
        <dbReference type="ChEBI" id="CHEBI:57527"/>
    </ligand>
</feature>
<feature type="binding site" evidence="2">
    <location>
        <position position="63"/>
    </location>
    <ligand>
        <name>GDP-alpha-D-mannose</name>
        <dbReference type="ChEBI" id="CHEBI:57527"/>
    </ligand>
</feature>
<feature type="binding site" evidence="2">
    <location>
        <position position="65"/>
    </location>
    <ligand>
        <name>GDP-alpha-D-mannose</name>
        <dbReference type="ChEBI" id="CHEBI:57527"/>
    </ligand>
</feature>
<feature type="binding site" evidence="2">
    <location>
        <position position="118"/>
    </location>
    <ligand>
        <name>GDP-alpha-D-mannose</name>
        <dbReference type="ChEBI" id="CHEBI:57527"/>
    </ligand>
</feature>
<feature type="binding site" evidence="2">
    <location>
        <position position="119"/>
    </location>
    <ligand>
        <name>GDP-alpha-D-mannose</name>
        <dbReference type="ChEBI" id="CHEBI:57527"/>
    </ligand>
</feature>
<feature type="binding site" evidence="2">
    <location>
        <position position="120"/>
    </location>
    <ligand>
        <name>GDP-alpha-D-mannose</name>
        <dbReference type="ChEBI" id="CHEBI:57527"/>
    </ligand>
</feature>
<feature type="binding site" evidence="2">
    <location>
        <position position="120"/>
    </location>
    <ligand>
        <name>Mg(2+)</name>
        <dbReference type="ChEBI" id="CHEBI:18420"/>
    </ligand>
</feature>
<feature type="binding site" evidence="2">
    <location>
        <position position="120"/>
    </location>
    <ligand>
        <name>Mn(2+)</name>
        <dbReference type="ChEBI" id="CHEBI:29035"/>
    </ligand>
</feature>
<feature type="binding site" evidence="2">
    <location>
        <position position="147"/>
    </location>
    <ligand>
        <name>GDP-alpha-D-mannose</name>
        <dbReference type="ChEBI" id="CHEBI:57527"/>
    </ligand>
</feature>
<feature type="binding site" evidence="2">
    <location>
        <position position="234"/>
    </location>
    <ligand>
        <name>GDP-alpha-D-mannose</name>
        <dbReference type="ChEBI" id="CHEBI:57527"/>
    </ligand>
</feature>
<feature type="binding site" evidence="2">
    <location>
        <position position="240"/>
    </location>
    <ligand>
        <name>GDP-alpha-D-mannose</name>
        <dbReference type="ChEBI" id="CHEBI:57527"/>
    </ligand>
</feature>
<feature type="modified residue" description="N-acetylalanine" evidence="1">
    <location>
        <position position="2"/>
    </location>
</feature>
<feature type="modified residue" description="Phosphoserine" evidence="1">
    <location>
        <position position="9"/>
    </location>
</feature>
<evidence type="ECO:0000250" key="1">
    <source>
        <dbReference type="UniProtKB" id="O60762"/>
    </source>
</evidence>
<evidence type="ECO:0000250" key="2">
    <source>
        <dbReference type="UniProtKB" id="Q8U4M3"/>
    </source>
</evidence>
<evidence type="ECO:0000256" key="3">
    <source>
        <dbReference type="SAM" id="MobiDB-lite"/>
    </source>
</evidence>
<evidence type="ECO:0000305" key="4"/>
<keyword id="KW-0007">Acetylation</keyword>
<keyword id="KW-0256">Endoplasmic reticulum</keyword>
<keyword id="KW-0328">Glycosyltransferase</keyword>
<keyword id="KW-0460">Magnesium</keyword>
<keyword id="KW-0464">Manganese</keyword>
<keyword id="KW-0479">Metal-binding</keyword>
<keyword id="KW-0597">Phosphoprotein</keyword>
<keyword id="KW-1185">Reference proteome</keyword>
<keyword id="KW-0808">Transferase</keyword>
<accession>Q1JQ93</accession>
<name>DPM1_BOVIN</name>
<reference key="1">
    <citation type="submission" date="2006-05" db="EMBL/GenBank/DDBJ databases">
        <authorList>
            <consortium name="NIH - Mammalian Gene Collection (MGC) project"/>
        </authorList>
    </citation>
    <scope>NUCLEOTIDE SEQUENCE [LARGE SCALE MRNA]</scope>
    <source>
        <strain>Hereford</strain>
        <tissue>Fetal cerebellum</tissue>
    </source>
</reference>
<sequence>MAAEEASRSSPRFRREPKGRVSRQDKYSVLLPTYNERENLPFIVWLLVKSFSESGFNYEIIIIDDGSPDGTRDVAEQLEKIYGSDRILLRPREKKLGLGTAYIHGMKHATGNYIIIMDADLSHHPKFIPEFIRKQKEGNFDIVSGTRYKGNGGVYGWDLKRKIISRVANFITQILLRPGASDLTGSFRLYRKEVLQKLIGKCISKGYVFQMEMIVRARQLNYTIGEVPISFVDRVYGESKLGGNEIVSFLKGLLTLFATT</sequence>
<protein>
    <recommendedName>
        <fullName>Dolichol-phosphate mannosyltransferase subunit 1</fullName>
        <ecNumber>2.4.1.83</ecNumber>
    </recommendedName>
    <alternativeName>
        <fullName>Dolichol-phosphate mannose synthase subunit 1</fullName>
        <shortName>DPM synthase subunit 1</shortName>
    </alternativeName>
    <alternativeName>
        <fullName>Dolichyl-phosphate beta-D-mannosyltransferase subunit 1</fullName>
    </alternativeName>
    <alternativeName>
        <fullName>Mannose-P-dolichol synthase subunit 1</fullName>
        <shortName>MPD synthase subunit 1</shortName>
    </alternativeName>
</protein>
<dbReference type="EC" id="2.4.1.83"/>
<dbReference type="EMBL" id="BC116151">
    <property type="protein sequence ID" value="AAI16152.1"/>
    <property type="molecule type" value="mRNA"/>
</dbReference>
<dbReference type="RefSeq" id="NP_001069481.1">
    <property type="nucleotide sequence ID" value="NM_001076013.2"/>
</dbReference>
<dbReference type="SMR" id="Q1JQ93"/>
<dbReference type="FunCoup" id="Q1JQ93">
    <property type="interactions" value="3778"/>
</dbReference>
<dbReference type="STRING" id="9913.ENSBTAP00000010153"/>
<dbReference type="CAZy" id="GT2">
    <property type="family name" value="Glycosyltransferase Family 2"/>
</dbReference>
<dbReference type="iPTMnet" id="Q1JQ93"/>
<dbReference type="PaxDb" id="9913-ENSBTAP00000010153"/>
<dbReference type="GeneID" id="534097"/>
<dbReference type="KEGG" id="bta:534097"/>
<dbReference type="CTD" id="8813"/>
<dbReference type="eggNOG" id="KOG2978">
    <property type="taxonomic scope" value="Eukaryota"/>
</dbReference>
<dbReference type="InParanoid" id="Q1JQ93"/>
<dbReference type="OrthoDB" id="2603at2759"/>
<dbReference type="UniPathway" id="UPA00378"/>
<dbReference type="Proteomes" id="UP000009136">
    <property type="component" value="Unplaced"/>
</dbReference>
<dbReference type="GO" id="GO:0005789">
    <property type="term" value="C:endoplasmic reticulum membrane"/>
    <property type="evidence" value="ECO:0000250"/>
    <property type="project" value="UniProtKB"/>
</dbReference>
<dbReference type="GO" id="GO:0004582">
    <property type="term" value="F:dolichyl-phosphate beta-D-mannosyltransferase activity"/>
    <property type="evidence" value="ECO:0000250"/>
    <property type="project" value="UniProtKB"/>
</dbReference>
<dbReference type="GO" id="GO:0004169">
    <property type="term" value="F:dolichyl-phosphate-mannose-protein mannosyltransferase activity"/>
    <property type="evidence" value="ECO:0000250"/>
    <property type="project" value="UniProtKB"/>
</dbReference>
<dbReference type="GO" id="GO:0046872">
    <property type="term" value="F:metal ion binding"/>
    <property type="evidence" value="ECO:0000250"/>
    <property type="project" value="UniProtKB"/>
</dbReference>
<dbReference type="GO" id="GO:0180047">
    <property type="term" value="P:dolichol phosphate mannose biosynthetic process"/>
    <property type="evidence" value="ECO:0000250"/>
    <property type="project" value="UniProtKB"/>
</dbReference>
<dbReference type="GO" id="GO:0006488">
    <property type="term" value="P:dolichol-linked oligosaccharide biosynthetic process"/>
    <property type="evidence" value="ECO:0000318"/>
    <property type="project" value="GO_Central"/>
</dbReference>
<dbReference type="GO" id="GO:0006506">
    <property type="term" value="P:GPI anchor biosynthetic process"/>
    <property type="evidence" value="ECO:0000250"/>
    <property type="project" value="UniProtKB"/>
</dbReference>
<dbReference type="GO" id="GO:0035268">
    <property type="term" value="P:protein mannosylation"/>
    <property type="evidence" value="ECO:0000250"/>
    <property type="project" value="UniProtKB"/>
</dbReference>
<dbReference type="GO" id="GO:0035269">
    <property type="term" value="P:protein O-linked mannosylation"/>
    <property type="evidence" value="ECO:0000250"/>
    <property type="project" value="UniProtKB"/>
</dbReference>
<dbReference type="CDD" id="cd06442">
    <property type="entry name" value="DPM1_like"/>
    <property type="match status" value="1"/>
</dbReference>
<dbReference type="FunFam" id="3.90.550.10:FF:000036">
    <property type="entry name" value="Dolichol-phosphate mannosyltransferase subunit 1"/>
    <property type="match status" value="1"/>
</dbReference>
<dbReference type="Gene3D" id="3.90.550.10">
    <property type="entry name" value="Spore Coat Polysaccharide Biosynthesis Protein SpsA, Chain A"/>
    <property type="match status" value="1"/>
</dbReference>
<dbReference type="InterPro" id="IPR039528">
    <property type="entry name" value="DPM1-like"/>
</dbReference>
<dbReference type="InterPro" id="IPR001173">
    <property type="entry name" value="Glyco_trans_2-like"/>
</dbReference>
<dbReference type="InterPro" id="IPR029044">
    <property type="entry name" value="Nucleotide-diphossugar_trans"/>
</dbReference>
<dbReference type="PANTHER" id="PTHR43398">
    <property type="entry name" value="DOLICHOL-PHOSPHATE MANNOSYLTRANSFERASE SUBUNIT 1"/>
    <property type="match status" value="1"/>
</dbReference>
<dbReference type="PANTHER" id="PTHR43398:SF1">
    <property type="entry name" value="DOLICHOL-PHOSPHATE MANNOSYLTRANSFERASE SUBUNIT 1"/>
    <property type="match status" value="1"/>
</dbReference>
<dbReference type="Pfam" id="PF00535">
    <property type="entry name" value="Glycos_transf_2"/>
    <property type="match status" value="1"/>
</dbReference>
<dbReference type="SUPFAM" id="SSF53448">
    <property type="entry name" value="Nucleotide-diphospho-sugar transferases"/>
    <property type="match status" value="1"/>
</dbReference>
<organism>
    <name type="scientific">Bos taurus</name>
    <name type="common">Bovine</name>
    <dbReference type="NCBI Taxonomy" id="9913"/>
    <lineage>
        <taxon>Eukaryota</taxon>
        <taxon>Metazoa</taxon>
        <taxon>Chordata</taxon>
        <taxon>Craniata</taxon>
        <taxon>Vertebrata</taxon>
        <taxon>Euteleostomi</taxon>
        <taxon>Mammalia</taxon>
        <taxon>Eutheria</taxon>
        <taxon>Laurasiatheria</taxon>
        <taxon>Artiodactyla</taxon>
        <taxon>Ruminantia</taxon>
        <taxon>Pecora</taxon>
        <taxon>Bovidae</taxon>
        <taxon>Bovinae</taxon>
        <taxon>Bos</taxon>
    </lineage>
</organism>
<comment type="function">
    <text evidence="1">Transfers mannose from GDP-mannose to dolichol monophosphate to form dolichol phosphate mannose (Dol-P-Man) which is the mannosyl donor in pathways leading to N-glycosylation, glycosyl phosphatidylinositol membrane anchoring, and O-mannosylation of proteins; catalytic subunit of the dolichol-phosphate mannose (DPM) synthase complex.</text>
</comment>
<comment type="catalytic activity">
    <reaction evidence="1">
        <text>a di-trans,poly-cis-dolichyl phosphate + GDP-alpha-D-mannose = a di-trans,poly-cis-dolichyl beta-D-mannosyl phosphate + GDP</text>
        <dbReference type="Rhea" id="RHEA:21184"/>
        <dbReference type="Rhea" id="RHEA-COMP:19498"/>
        <dbReference type="Rhea" id="RHEA-COMP:19501"/>
        <dbReference type="ChEBI" id="CHEBI:57527"/>
        <dbReference type="ChEBI" id="CHEBI:57683"/>
        <dbReference type="ChEBI" id="CHEBI:58189"/>
        <dbReference type="ChEBI" id="CHEBI:58211"/>
        <dbReference type="EC" id="2.4.1.83"/>
    </reaction>
</comment>
<comment type="cofactor">
    <cofactor evidence="2">
        <name>Mg(2+)</name>
        <dbReference type="ChEBI" id="CHEBI:18420"/>
    </cofactor>
    <cofactor evidence="2">
        <name>Mn(2+)</name>
        <dbReference type="ChEBI" id="CHEBI:29035"/>
    </cofactor>
    <cofactor evidence="2">
        <name>Ca(2+)</name>
        <dbReference type="ChEBI" id="CHEBI:29108"/>
    </cofactor>
    <text evidence="2">Binds 1 divalent metal cation.</text>
</comment>
<comment type="pathway">
    <text evidence="1">Protein modification; protein glycosylation.</text>
</comment>
<comment type="subunit">
    <text evidence="1">Component of the dolichol-phosphate mannose (DPM) synthase complex composed of DPM1, DPM2 and DPM3; within the complex, directly interacts with DPM3. This interaction may stabilize DPM1.</text>
</comment>
<comment type="subcellular location">
    <subcellularLocation>
        <location evidence="1">Endoplasmic reticulum</location>
    </subcellularLocation>
</comment>
<comment type="similarity">
    <text evidence="4">Belongs to the glycosyltransferase 2 family.</text>
</comment>
<gene>
    <name type="primary">DPM1</name>
</gene>
<proteinExistence type="evidence at transcript level"/>